<reference key="1">
    <citation type="journal article" date="2008" name="PLoS Genet.">
        <title>Genomic islands in the pathogenic filamentous fungus Aspergillus fumigatus.</title>
        <authorList>
            <person name="Fedorova N.D."/>
            <person name="Khaldi N."/>
            <person name="Joardar V.S."/>
            <person name="Maiti R."/>
            <person name="Amedeo P."/>
            <person name="Anderson M.J."/>
            <person name="Crabtree J."/>
            <person name="Silva J.C."/>
            <person name="Badger J.H."/>
            <person name="Albarraq A."/>
            <person name="Angiuoli S."/>
            <person name="Bussey H."/>
            <person name="Bowyer P."/>
            <person name="Cotty P.J."/>
            <person name="Dyer P.S."/>
            <person name="Egan A."/>
            <person name="Galens K."/>
            <person name="Fraser-Liggett C.M."/>
            <person name="Haas B.J."/>
            <person name="Inman J.M."/>
            <person name="Kent R."/>
            <person name="Lemieux S."/>
            <person name="Malavazi I."/>
            <person name="Orvis J."/>
            <person name="Roemer T."/>
            <person name="Ronning C.M."/>
            <person name="Sundaram J.P."/>
            <person name="Sutton G."/>
            <person name="Turner G."/>
            <person name="Venter J.C."/>
            <person name="White O.R."/>
            <person name="Whitty B.R."/>
            <person name="Youngman P."/>
            <person name="Wolfe K.H."/>
            <person name="Goldman G.H."/>
            <person name="Wortman J.R."/>
            <person name="Jiang B."/>
            <person name="Denning D.W."/>
            <person name="Nierman W.C."/>
        </authorList>
    </citation>
    <scope>NUCLEOTIDE SEQUENCE [LARGE SCALE GENOMIC DNA]</scope>
    <source>
        <strain>CBS 144.89 / FGSC A1163 / CEA10</strain>
    </source>
</reference>
<proteinExistence type="inferred from homology"/>
<dbReference type="EC" id="4.2.1.109" evidence="1"/>
<dbReference type="EMBL" id="DS499598">
    <property type="protein sequence ID" value="EDP50638.1"/>
    <property type="molecule type" value="Genomic_DNA"/>
</dbReference>
<dbReference type="SMR" id="B0Y4N9"/>
<dbReference type="EnsemblFungi" id="EDP50638">
    <property type="protein sequence ID" value="EDP50638"/>
    <property type="gene ID" value="AFUB_069750"/>
</dbReference>
<dbReference type="VEuPathDB" id="FungiDB:AFUB_069750"/>
<dbReference type="HOGENOM" id="CLU_006033_4_0_1"/>
<dbReference type="OrthoDB" id="33422at5052"/>
<dbReference type="PhylomeDB" id="B0Y4N9"/>
<dbReference type="UniPathway" id="UPA00904">
    <property type="reaction ID" value="UER00875"/>
</dbReference>
<dbReference type="Proteomes" id="UP000001699">
    <property type="component" value="Unassembled WGS sequence"/>
</dbReference>
<dbReference type="GO" id="GO:0005737">
    <property type="term" value="C:cytoplasm"/>
    <property type="evidence" value="ECO:0007669"/>
    <property type="project" value="UniProtKB-SubCell"/>
</dbReference>
<dbReference type="GO" id="GO:0046570">
    <property type="term" value="F:methylthioribulose 1-phosphate dehydratase activity"/>
    <property type="evidence" value="ECO:0007669"/>
    <property type="project" value="UniProtKB-UniRule"/>
</dbReference>
<dbReference type="GO" id="GO:0008270">
    <property type="term" value="F:zinc ion binding"/>
    <property type="evidence" value="ECO:0007669"/>
    <property type="project" value="UniProtKB-UniRule"/>
</dbReference>
<dbReference type="GO" id="GO:0019509">
    <property type="term" value="P:L-methionine salvage from methylthioadenosine"/>
    <property type="evidence" value="ECO:0007669"/>
    <property type="project" value="UniProtKB-UniRule"/>
</dbReference>
<dbReference type="FunFam" id="3.40.225.10:FF:000003">
    <property type="entry name" value="Methylthioribulose-1-phosphate dehydratase"/>
    <property type="match status" value="1"/>
</dbReference>
<dbReference type="Gene3D" id="3.40.225.10">
    <property type="entry name" value="Class II aldolase/adducin N-terminal domain"/>
    <property type="match status" value="1"/>
</dbReference>
<dbReference type="HAMAP" id="MF_03116">
    <property type="entry name" value="Salvage_MtnB_euk"/>
    <property type="match status" value="1"/>
</dbReference>
<dbReference type="InterPro" id="IPR001303">
    <property type="entry name" value="Aldolase_II/adducin_N"/>
</dbReference>
<dbReference type="InterPro" id="IPR036409">
    <property type="entry name" value="Aldolase_II/adducin_N_sf"/>
</dbReference>
<dbReference type="InterPro" id="IPR017714">
    <property type="entry name" value="MethylthioRu-1-P_deHdtase_MtnB"/>
</dbReference>
<dbReference type="InterPro" id="IPR027514">
    <property type="entry name" value="Salvage_MtnB_euk"/>
</dbReference>
<dbReference type="NCBIfam" id="TIGR03328">
    <property type="entry name" value="salvage_mtnB"/>
    <property type="match status" value="1"/>
</dbReference>
<dbReference type="PANTHER" id="PTHR10640">
    <property type="entry name" value="METHYLTHIORIBULOSE-1-PHOSPHATE DEHYDRATASE"/>
    <property type="match status" value="1"/>
</dbReference>
<dbReference type="PANTHER" id="PTHR10640:SF7">
    <property type="entry name" value="METHYLTHIORIBULOSE-1-PHOSPHATE DEHYDRATASE"/>
    <property type="match status" value="1"/>
</dbReference>
<dbReference type="Pfam" id="PF00596">
    <property type="entry name" value="Aldolase_II"/>
    <property type="match status" value="1"/>
</dbReference>
<dbReference type="SMART" id="SM01007">
    <property type="entry name" value="Aldolase_II"/>
    <property type="match status" value="1"/>
</dbReference>
<dbReference type="SUPFAM" id="SSF53639">
    <property type="entry name" value="AraD/HMP-PK domain-like"/>
    <property type="match status" value="1"/>
</dbReference>
<feature type="chain" id="PRO_0000393808" description="Methylthioribulose-1-phosphate dehydratase">
    <location>
        <begin position="1"/>
        <end position="240"/>
    </location>
</feature>
<feature type="region of interest" description="Disordered" evidence="2">
    <location>
        <begin position="1"/>
        <end position="20"/>
    </location>
</feature>
<feature type="compositionally biased region" description="Basic and acidic residues" evidence="2">
    <location>
        <begin position="1"/>
        <end position="10"/>
    </location>
</feature>
<feature type="active site" description="Proton donor/acceptor" evidence="1">
    <location>
        <position position="146"/>
    </location>
</feature>
<feature type="binding site" evidence="1">
    <location>
        <position position="100"/>
    </location>
    <ligand>
        <name>substrate</name>
    </ligand>
</feature>
<feature type="binding site" evidence="1">
    <location>
        <position position="117"/>
    </location>
    <ligand>
        <name>Zn(2+)</name>
        <dbReference type="ChEBI" id="CHEBI:29105"/>
    </ligand>
</feature>
<feature type="binding site" evidence="1">
    <location>
        <position position="119"/>
    </location>
    <ligand>
        <name>Zn(2+)</name>
        <dbReference type="ChEBI" id="CHEBI:29105"/>
    </ligand>
</feature>
<feature type="binding site" evidence="1">
    <location>
        <position position="202"/>
    </location>
    <ligand>
        <name>Zn(2+)</name>
        <dbReference type="ChEBI" id="CHEBI:29105"/>
    </ligand>
</feature>
<comment type="function">
    <text evidence="1">Catalyzes the dehydration of methylthioribulose-1-phosphate (MTRu-1-P) into 2,3-diketo-5-methylthiopentyl-1-phosphate (DK-MTP-1-P).</text>
</comment>
<comment type="catalytic activity">
    <reaction evidence="1">
        <text>5-(methylsulfanyl)-D-ribulose 1-phosphate = 5-methylsulfanyl-2,3-dioxopentyl phosphate + H2O</text>
        <dbReference type="Rhea" id="RHEA:15549"/>
        <dbReference type="ChEBI" id="CHEBI:15377"/>
        <dbReference type="ChEBI" id="CHEBI:58548"/>
        <dbReference type="ChEBI" id="CHEBI:58828"/>
        <dbReference type="EC" id="4.2.1.109"/>
    </reaction>
</comment>
<comment type="cofactor">
    <cofactor evidence="1">
        <name>Zn(2+)</name>
        <dbReference type="ChEBI" id="CHEBI:29105"/>
    </cofactor>
    <text evidence="1">Binds 1 zinc ion per subunit.</text>
</comment>
<comment type="pathway">
    <text evidence="1">Amino-acid biosynthesis; L-methionine biosynthesis via salvage pathway; L-methionine from S-methyl-5-thio-alpha-D-ribose 1-phosphate: step 2/6.</text>
</comment>
<comment type="subcellular location">
    <subcellularLocation>
        <location evidence="1">Cytoplasm</location>
    </subcellularLocation>
</comment>
<comment type="similarity">
    <text evidence="1">Belongs to the aldolase class II family. MtnB subfamily.</text>
</comment>
<gene>
    <name evidence="1" type="primary">mde1</name>
    <name type="ORF">AFUB_069750</name>
</gene>
<evidence type="ECO:0000255" key="1">
    <source>
        <dbReference type="HAMAP-Rule" id="MF_03116"/>
    </source>
</evidence>
<evidence type="ECO:0000256" key="2">
    <source>
        <dbReference type="SAM" id="MobiDB-lite"/>
    </source>
</evidence>
<sequence length="240" mass="27167">MAQEIEKTNNDHLVQSSDPEHPANLIPELCRKFYNWGWVTGTGGGTSIRRGDHIFIAPSGVQKELIQPHNIFVLEFPTPKYPPSDRKYIRKPLELKPSACTPLFLTAFERGAGCCIHTHSQWAVLVTLLVEREKGPDACFEISNIEQIKGIPRGKGKGMLGFFDTLRIPIIENTAFEEDLTESLEKAMDQYPDTYAVLVRRHGIYVWGDDVAKAKTQCESLDYLFQLAVEMHKLGLPWVK</sequence>
<protein>
    <recommendedName>
        <fullName evidence="1">Methylthioribulose-1-phosphate dehydratase</fullName>
        <shortName evidence="1">MTRu-1-P dehydratase</shortName>
        <ecNumber evidence="1">4.2.1.109</ecNumber>
    </recommendedName>
</protein>
<name>MTNB_ASPFC</name>
<keyword id="KW-0028">Amino-acid biosynthesis</keyword>
<keyword id="KW-0963">Cytoplasm</keyword>
<keyword id="KW-0456">Lyase</keyword>
<keyword id="KW-0479">Metal-binding</keyword>
<keyword id="KW-0486">Methionine biosynthesis</keyword>
<keyword id="KW-0862">Zinc</keyword>
<accession>B0Y4N9</accession>
<organism>
    <name type="scientific">Aspergillus fumigatus (strain CBS 144.89 / FGSC A1163 / CEA10)</name>
    <name type="common">Neosartorya fumigata</name>
    <dbReference type="NCBI Taxonomy" id="451804"/>
    <lineage>
        <taxon>Eukaryota</taxon>
        <taxon>Fungi</taxon>
        <taxon>Dikarya</taxon>
        <taxon>Ascomycota</taxon>
        <taxon>Pezizomycotina</taxon>
        <taxon>Eurotiomycetes</taxon>
        <taxon>Eurotiomycetidae</taxon>
        <taxon>Eurotiales</taxon>
        <taxon>Aspergillaceae</taxon>
        <taxon>Aspergillus</taxon>
        <taxon>Aspergillus subgen. Fumigati</taxon>
    </lineage>
</organism>